<evidence type="ECO:0000255" key="1">
    <source>
        <dbReference type="HAMAP-Rule" id="MF_00445"/>
    </source>
</evidence>
<organism>
    <name type="scientific">Thermodesulfovibrio yellowstonii (strain ATCC 51303 / DSM 11347 / YP87)</name>
    <dbReference type="NCBI Taxonomy" id="289376"/>
    <lineage>
        <taxon>Bacteria</taxon>
        <taxon>Pseudomonadati</taxon>
        <taxon>Nitrospirota</taxon>
        <taxon>Thermodesulfovibrionia</taxon>
        <taxon>Thermodesulfovibrionales</taxon>
        <taxon>Thermodesulfovibrionaceae</taxon>
        <taxon>Thermodesulfovibrio</taxon>
    </lineage>
</organism>
<comment type="function">
    <text evidence="1">NDH-1 shuttles electrons from NADH, via FMN and iron-sulfur (Fe-S) centers, to quinones in the respiratory chain. The immediate electron acceptor for the enzyme in this species is believed to be ubiquinone. Couples the redox reaction to proton translocation (for every two electrons transferred, four hydrogen ions are translocated across the cytoplasmic membrane), and thus conserves the redox energy in a proton gradient.</text>
</comment>
<comment type="catalytic activity">
    <reaction evidence="1">
        <text>a quinone + NADH + 5 H(+)(in) = a quinol + NAD(+) + 4 H(+)(out)</text>
        <dbReference type="Rhea" id="RHEA:57888"/>
        <dbReference type="ChEBI" id="CHEBI:15378"/>
        <dbReference type="ChEBI" id="CHEBI:24646"/>
        <dbReference type="ChEBI" id="CHEBI:57540"/>
        <dbReference type="ChEBI" id="CHEBI:57945"/>
        <dbReference type="ChEBI" id="CHEBI:132124"/>
    </reaction>
</comment>
<comment type="subunit">
    <text evidence="1">NDH-1 is composed of 14 different subunits. Subunits NuoA, H, J, K, L, M, N constitute the membrane sector of the complex.</text>
</comment>
<comment type="subcellular location">
    <subcellularLocation>
        <location evidence="1">Cell inner membrane</location>
        <topology evidence="1">Multi-pass membrane protein</topology>
    </subcellularLocation>
</comment>
<comment type="similarity">
    <text evidence="1">Belongs to the complex I subunit 2 family.</text>
</comment>
<proteinExistence type="inferred from homology"/>
<gene>
    <name evidence="1" type="primary">nuoN2</name>
    <name type="ordered locus">THEYE_A1114</name>
</gene>
<dbReference type="EC" id="7.1.1.-" evidence="1"/>
<dbReference type="EMBL" id="CP001147">
    <property type="protein sequence ID" value="ACI21900.1"/>
    <property type="molecule type" value="Genomic_DNA"/>
</dbReference>
<dbReference type="RefSeq" id="WP_012546600.1">
    <property type="nucleotide sequence ID" value="NC_011296.1"/>
</dbReference>
<dbReference type="RefSeq" id="YP_002248938.1">
    <property type="nucleotide sequence ID" value="NC_011296.1"/>
</dbReference>
<dbReference type="SMR" id="B5YL23"/>
<dbReference type="FunCoup" id="B5YL23">
    <property type="interactions" value="124"/>
</dbReference>
<dbReference type="STRING" id="289376.THEYE_A1114"/>
<dbReference type="EnsemblBacteria" id="ACI21900">
    <property type="protein sequence ID" value="ACI21900"/>
    <property type="gene ID" value="THEYE_A1114"/>
</dbReference>
<dbReference type="KEGG" id="tye:THEYE_A1114"/>
<dbReference type="PATRIC" id="fig|289376.4.peg.1091"/>
<dbReference type="eggNOG" id="COG1007">
    <property type="taxonomic scope" value="Bacteria"/>
</dbReference>
<dbReference type="HOGENOM" id="CLU_007100_1_5_0"/>
<dbReference type="InParanoid" id="B5YL23"/>
<dbReference type="OrthoDB" id="9807568at2"/>
<dbReference type="Proteomes" id="UP000000718">
    <property type="component" value="Chromosome"/>
</dbReference>
<dbReference type="GO" id="GO:0005886">
    <property type="term" value="C:plasma membrane"/>
    <property type="evidence" value="ECO:0007669"/>
    <property type="project" value="UniProtKB-SubCell"/>
</dbReference>
<dbReference type="GO" id="GO:0008137">
    <property type="term" value="F:NADH dehydrogenase (ubiquinone) activity"/>
    <property type="evidence" value="ECO:0007669"/>
    <property type="project" value="InterPro"/>
</dbReference>
<dbReference type="GO" id="GO:0050136">
    <property type="term" value="F:NADH:ubiquinone reductase (non-electrogenic) activity"/>
    <property type="evidence" value="ECO:0007669"/>
    <property type="project" value="UniProtKB-UniRule"/>
</dbReference>
<dbReference type="GO" id="GO:0048038">
    <property type="term" value="F:quinone binding"/>
    <property type="evidence" value="ECO:0007669"/>
    <property type="project" value="UniProtKB-KW"/>
</dbReference>
<dbReference type="GO" id="GO:0042773">
    <property type="term" value="P:ATP synthesis coupled electron transport"/>
    <property type="evidence" value="ECO:0007669"/>
    <property type="project" value="InterPro"/>
</dbReference>
<dbReference type="HAMAP" id="MF_00445">
    <property type="entry name" value="NDH1_NuoN_1"/>
    <property type="match status" value="1"/>
</dbReference>
<dbReference type="InterPro" id="IPR010096">
    <property type="entry name" value="NADH-Q_OxRdtase_suN/2"/>
</dbReference>
<dbReference type="InterPro" id="IPR001750">
    <property type="entry name" value="ND/Mrp_TM"/>
</dbReference>
<dbReference type="NCBIfam" id="TIGR01770">
    <property type="entry name" value="NDH_I_N"/>
    <property type="match status" value="1"/>
</dbReference>
<dbReference type="PANTHER" id="PTHR22773">
    <property type="entry name" value="NADH DEHYDROGENASE"/>
    <property type="match status" value="1"/>
</dbReference>
<dbReference type="Pfam" id="PF00361">
    <property type="entry name" value="Proton_antipo_M"/>
    <property type="match status" value="1"/>
</dbReference>
<feature type="chain" id="PRO_0000391240" description="NADH-quinone oxidoreductase subunit N 2">
    <location>
        <begin position="1"/>
        <end position="452"/>
    </location>
</feature>
<feature type="transmembrane region" description="Helical" evidence="1">
    <location>
        <begin position="6"/>
        <end position="26"/>
    </location>
</feature>
<feature type="transmembrane region" description="Helical" evidence="1">
    <location>
        <begin position="33"/>
        <end position="53"/>
    </location>
</feature>
<feature type="transmembrane region" description="Helical" evidence="1">
    <location>
        <begin position="70"/>
        <end position="90"/>
    </location>
</feature>
<feature type="transmembrane region" description="Helical" evidence="1">
    <location>
        <begin position="97"/>
        <end position="117"/>
    </location>
</feature>
<feature type="transmembrane region" description="Helical" evidence="1">
    <location>
        <begin position="120"/>
        <end position="140"/>
    </location>
</feature>
<feature type="transmembrane region" description="Helical" evidence="1">
    <location>
        <begin position="154"/>
        <end position="174"/>
    </location>
</feature>
<feature type="transmembrane region" description="Helical" evidence="1">
    <location>
        <begin position="194"/>
        <end position="214"/>
    </location>
</feature>
<feature type="transmembrane region" description="Helical" evidence="1">
    <location>
        <begin position="232"/>
        <end position="252"/>
    </location>
</feature>
<feature type="transmembrane region" description="Helical" evidence="1">
    <location>
        <begin position="258"/>
        <end position="278"/>
    </location>
</feature>
<feature type="transmembrane region" description="Helical" evidence="1">
    <location>
        <begin position="286"/>
        <end position="306"/>
    </location>
</feature>
<feature type="transmembrane region" description="Helical" evidence="1">
    <location>
        <begin position="311"/>
        <end position="331"/>
    </location>
</feature>
<feature type="transmembrane region" description="Helical" evidence="1">
    <location>
        <begin position="355"/>
        <end position="375"/>
    </location>
</feature>
<feature type="transmembrane region" description="Helical" evidence="1">
    <location>
        <begin position="387"/>
        <end position="407"/>
    </location>
</feature>
<feature type="transmembrane region" description="Helical" evidence="1">
    <location>
        <begin position="432"/>
        <end position="452"/>
    </location>
</feature>
<reference key="1">
    <citation type="submission" date="2008-08" db="EMBL/GenBank/DDBJ databases">
        <title>The complete genome sequence of Thermodesulfovibrio yellowstonii strain ATCC 51303 / DSM 11347 / YP87.</title>
        <authorList>
            <person name="Dodson R.J."/>
            <person name="Durkin A.S."/>
            <person name="Wu M."/>
            <person name="Eisen J."/>
            <person name="Sutton G."/>
        </authorList>
    </citation>
    <scope>NUCLEOTIDE SEQUENCE [LARGE SCALE GENOMIC DNA]</scope>
    <source>
        <strain>ATCC 51303 / DSM 11347 / YP87</strain>
    </source>
</reference>
<name>NUON2_THEYD</name>
<sequence length="452" mass="50786">MIQYKVLIPEISLLILAIISFFYGFISRNYRTTYILSFLSILTAIILSVFNFGQKEFTSELIKIDLYRQTLRILVLFIGVFIIGLSYSDLKLKSSKSVEYVFLLLLSLFGMNLMIVANDLLILYLALETFSLSLYILAGFYRKESLSIEAGMKYFILGTLSSIILLGSIVFFYAQTGSTSYETFKLLKTENLNILLGVVFLISAFAFKLSLAPFHAWAPDVYQGAPTAVTAFLSTAPKVAVFGALINIFLSINLKLNIQDLIVIISALSMLVGNVLALRQNNLKRMLAYSSIAHAGYMFMAFLLPEKELLISLIPYLIVYVFMNLSAFAFIMNIKNGESIQNYLGVGRKNPLLSFCIIVIMFSLTGVPPTAGFIVKFNLFKNLLSYGYGSLVFFALLMSIFSAFYYLRPVFYLYKDSLVIDIYNHPLNNSMALSGALLLIFLGLFPNLLLIF</sequence>
<accession>B5YL23</accession>
<protein>
    <recommendedName>
        <fullName evidence="1">NADH-quinone oxidoreductase subunit N 2</fullName>
        <ecNumber evidence="1">7.1.1.-</ecNumber>
    </recommendedName>
    <alternativeName>
        <fullName evidence="1">NADH dehydrogenase I subunit N 2</fullName>
    </alternativeName>
    <alternativeName>
        <fullName evidence="1">NDH-1 subunit N 2</fullName>
    </alternativeName>
</protein>
<keyword id="KW-0997">Cell inner membrane</keyword>
<keyword id="KW-1003">Cell membrane</keyword>
<keyword id="KW-0472">Membrane</keyword>
<keyword id="KW-0520">NAD</keyword>
<keyword id="KW-0874">Quinone</keyword>
<keyword id="KW-1185">Reference proteome</keyword>
<keyword id="KW-1278">Translocase</keyword>
<keyword id="KW-0812">Transmembrane</keyword>
<keyword id="KW-1133">Transmembrane helix</keyword>
<keyword id="KW-0813">Transport</keyword>
<keyword id="KW-0830">Ubiquinone</keyword>